<protein>
    <recommendedName>
        <fullName evidence="1">Cell division protein CrgA</fullName>
    </recommendedName>
</protein>
<reference key="1">
    <citation type="journal article" date="2007" name="Microbiology">
        <title>Comparative analysis of the Corynebacterium glutamicum group and complete genome sequence of strain R.</title>
        <authorList>
            <person name="Yukawa H."/>
            <person name="Omumasaba C.A."/>
            <person name="Nonaka H."/>
            <person name="Kos P."/>
            <person name="Okai N."/>
            <person name="Suzuki N."/>
            <person name="Suda M."/>
            <person name="Tsuge Y."/>
            <person name="Watanabe J."/>
            <person name="Ikeda Y."/>
            <person name="Vertes A.A."/>
            <person name="Inui M."/>
        </authorList>
    </citation>
    <scope>NUCLEOTIDE SEQUENCE [LARGE SCALE GENOMIC DNA]</scope>
    <source>
        <strain>R</strain>
    </source>
</reference>
<keyword id="KW-0131">Cell cycle</keyword>
<keyword id="KW-0132">Cell division</keyword>
<keyword id="KW-1003">Cell membrane</keyword>
<keyword id="KW-0472">Membrane</keyword>
<keyword id="KW-0812">Transmembrane</keyword>
<keyword id="KW-1133">Transmembrane helix</keyword>
<feature type="chain" id="PRO_1000051700" description="Cell division protein CrgA">
    <location>
        <begin position="1"/>
        <end position="90"/>
    </location>
</feature>
<feature type="transmembrane region" description="Helical" evidence="1">
    <location>
        <begin position="38"/>
        <end position="58"/>
    </location>
</feature>
<feature type="transmembrane region" description="Helical" evidence="1">
    <location>
        <begin position="67"/>
        <end position="87"/>
    </location>
</feature>
<feature type="region of interest" description="Disordered" evidence="2">
    <location>
        <begin position="1"/>
        <end position="25"/>
    </location>
</feature>
<feature type="compositionally biased region" description="Polar residues" evidence="2">
    <location>
        <begin position="9"/>
        <end position="22"/>
    </location>
</feature>
<gene>
    <name evidence="1" type="primary">crgA</name>
    <name type="ordered locus">cgR_0053</name>
</gene>
<evidence type="ECO:0000255" key="1">
    <source>
        <dbReference type="HAMAP-Rule" id="MF_00631"/>
    </source>
</evidence>
<evidence type="ECO:0000256" key="2">
    <source>
        <dbReference type="SAM" id="MobiDB-lite"/>
    </source>
</evidence>
<organism>
    <name type="scientific">Corynebacterium glutamicum (strain R)</name>
    <dbReference type="NCBI Taxonomy" id="340322"/>
    <lineage>
        <taxon>Bacteria</taxon>
        <taxon>Bacillati</taxon>
        <taxon>Actinomycetota</taxon>
        <taxon>Actinomycetes</taxon>
        <taxon>Mycobacteriales</taxon>
        <taxon>Corynebacteriaceae</taxon>
        <taxon>Corynebacterium</taxon>
    </lineage>
</organism>
<dbReference type="EMBL" id="AP009044">
    <property type="protein sequence ID" value="BAF53014.1"/>
    <property type="molecule type" value="Genomic_DNA"/>
</dbReference>
<dbReference type="RefSeq" id="WP_003855388.1">
    <property type="nucleotide sequence ID" value="NC_009342.1"/>
</dbReference>
<dbReference type="SMR" id="A4Q9X1"/>
<dbReference type="KEGG" id="cgt:cgR_0053"/>
<dbReference type="HOGENOM" id="CLU_149126_2_0_11"/>
<dbReference type="PhylomeDB" id="A4Q9X1"/>
<dbReference type="Proteomes" id="UP000006698">
    <property type="component" value="Chromosome"/>
</dbReference>
<dbReference type="GO" id="GO:0005886">
    <property type="term" value="C:plasma membrane"/>
    <property type="evidence" value="ECO:0007669"/>
    <property type="project" value="UniProtKB-SubCell"/>
</dbReference>
<dbReference type="GO" id="GO:0051301">
    <property type="term" value="P:cell division"/>
    <property type="evidence" value="ECO:0007669"/>
    <property type="project" value="UniProtKB-UniRule"/>
</dbReference>
<dbReference type="HAMAP" id="MF_00631">
    <property type="entry name" value="CrgA"/>
    <property type="match status" value="1"/>
</dbReference>
<dbReference type="InterPro" id="IPR009619">
    <property type="entry name" value="CrgA"/>
</dbReference>
<dbReference type="NCBIfam" id="NF001194">
    <property type="entry name" value="PRK00159.1"/>
    <property type="match status" value="1"/>
</dbReference>
<dbReference type="Pfam" id="PF06781">
    <property type="entry name" value="CrgA"/>
    <property type="match status" value="1"/>
</dbReference>
<sequence>MPKARVTKNETAPVSSNPSANRTPVKINSAGTPMWYKVIMFAFMIVGLAWLIVNYLVGPQIPFMADLGAWNYGIGFGLMIIGLLMTMGWR</sequence>
<proteinExistence type="inferred from homology"/>
<name>CRGA_CORGB</name>
<accession>A4Q9X1</accession>
<comment type="function">
    <text evidence="1">Involved in cell division.</text>
</comment>
<comment type="subcellular location">
    <subcellularLocation>
        <location evidence="1">Cell membrane</location>
        <topology evidence="1">Multi-pass membrane protein</topology>
    </subcellularLocation>
</comment>
<comment type="similarity">
    <text evidence="1">Belongs to the CrgA family.</text>
</comment>